<accession>B4U626</accession>
<gene>
    <name evidence="1" type="primary">glgA</name>
    <name type="ordered locus">HY04AAS1_0004</name>
</gene>
<organism>
    <name type="scientific">Hydrogenobaculum sp. (strain Y04AAS1)</name>
    <dbReference type="NCBI Taxonomy" id="380749"/>
    <lineage>
        <taxon>Bacteria</taxon>
        <taxon>Pseudomonadati</taxon>
        <taxon>Aquificota</taxon>
        <taxon>Aquificia</taxon>
        <taxon>Aquificales</taxon>
        <taxon>Aquificaceae</taxon>
        <taxon>Hydrogenobaculum</taxon>
    </lineage>
</organism>
<keyword id="KW-0320">Glycogen biosynthesis</keyword>
<keyword id="KW-0328">Glycosyltransferase</keyword>
<keyword id="KW-0808">Transferase</keyword>
<protein>
    <recommendedName>
        <fullName evidence="1">Glycogen synthase</fullName>
        <ecNumber evidence="1">2.4.1.21</ecNumber>
    </recommendedName>
    <alternativeName>
        <fullName evidence="1">Starch [bacterial glycogen] synthase</fullName>
    </alternativeName>
</protein>
<name>GLGA_HYDS0</name>
<sequence length="482" mass="55194">MKICFVASECEPLVKVGGLGDVVQSLAKELVNLGHQVSVILPFYKSIKAQNVQFITQHTLNLGGVYYDFHIYKTNLDNVDIFLIDQKTFFGREYVYGTPKGPYEDNYLRFAFFSLASLETLSHVCHIPDIIHIHDWHTALVAVYKDLYFKHLDETATVLTIHNIAFQGIFLGHILPQIGIPWGLFNPEDLEFYNQVNFLKGGIVHSDVITTVSKTHAKEIQTNMGFGLEGVLREKRYVFGILNGIDTESWNPATDKSLYQNYDINTFKAGKEKNKMYVKELFGLETPHTRPLAAFIARLAKQKGLDLIEKAVDDAVKIGYDFIFLGSGDYYYQGKVLDMVKRNMGYVAARIEYNDILSRKLYAGADMFLMPSEYEPCGIGQMIAMRYGAIPIVHKTGGLADTVVDYNEDNEHGTGFSFEDYTYKDFLYTMARAMIVYQKKYIPEDNEWYNIVSNAMAQDFSWRRSVQEYIKIYKTAKLIKMH</sequence>
<comment type="function">
    <text evidence="1">Synthesizes alpha-1,4-glucan chains using ADP-glucose.</text>
</comment>
<comment type="catalytic activity">
    <reaction evidence="1">
        <text>[(1-&gt;4)-alpha-D-glucosyl](n) + ADP-alpha-D-glucose = [(1-&gt;4)-alpha-D-glucosyl](n+1) + ADP + H(+)</text>
        <dbReference type="Rhea" id="RHEA:18189"/>
        <dbReference type="Rhea" id="RHEA-COMP:9584"/>
        <dbReference type="Rhea" id="RHEA-COMP:9587"/>
        <dbReference type="ChEBI" id="CHEBI:15378"/>
        <dbReference type="ChEBI" id="CHEBI:15444"/>
        <dbReference type="ChEBI" id="CHEBI:57498"/>
        <dbReference type="ChEBI" id="CHEBI:456216"/>
        <dbReference type="EC" id="2.4.1.21"/>
    </reaction>
</comment>
<comment type="pathway">
    <text evidence="1">Glycan biosynthesis; glycogen biosynthesis.</text>
</comment>
<comment type="similarity">
    <text evidence="1">Belongs to the glycosyltransferase 1 family. Bacterial/plant glycogen synthase subfamily.</text>
</comment>
<evidence type="ECO:0000255" key="1">
    <source>
        <dbReference type="HAMAP-Rule" id="MF_00484"/>
    </source>
</evidence>
<reference key="1">
    <citation type="journal article" date="2009" name="J. Bacteriol.">
        <title>Complete and draft genome sequences of six members of the Aquificales.</title>
        <authorList>
            <person name="Reysenbach A.-L."/>
            <person name="Hamamura N."/>
            <person name="Podar M."/>
            <person name="Griffiths E."/>
            <person name="Ferreira S."/>
            <person name="Hochstein R."/>
            <person name="Heidelberg J."/>
            <person name="Johnson J."/>
            <person name="Mead D."/>
            <person name="Pohorille A."/>
            <person name="Sarmiento M."/>
            <person name="Schweighofer K."/>
            <person name="Seshadri R."/>
            <person name="Voytek M.A."/>
        </authorList>
    </citation>
    <scope>NUCLEOTIDE SEQUENCE [LARGE SCALE GENOMIC DNA]</scope>
    <source>
        <strain>Y04AAS1</strain>
    </source>
</reference>
<dbReference type="EC" id="2.4.1.21" evidence="1"/>
<dbReference type="EMBL" id="CP001130">
    <property type="protein sequence ID" value="ACG56696.1"/>
    <property type="molecule type" value="Genomic_DNA"/>
</dbReference>
<dbReference type="RefSeq" id="WP_012513053.1">
    <property type="nucleotide sequence ID" value="NC_011126.1"/>
</dbReference>
<dbReference type="SMR" id="B4U626"/>
<dbReference type="STRING" id="380749.HY04AAS1_0004"/>
<dbReference type="CAZy" id="GT5">
    <property type="family name" value="Glycosyltransferase Family 5"/>
</dbReference>
<dbReference type="KEGG" id="hya:HY04AAS1_0004"/>
<dbReference type="eggNOG" id="COG0297">
    <property type="taxonomic scope" value="Bacteria"/>
</dbReference>
<dbReference type="HOGENOM" id="CLU_009583_18_5_0"/>
<dbReference type="OrthoDB" id="9808590at2"/>
<dbReference type="UniPathway" id="UPA00164"/>
<dbReference type="GO" id="GO:0009011">
    <property type="term" value="F:alpha-1,4-glucan glucosyltransferase (ADP-glucose donor) activity"/>
    <property type="evidence" value="ECO:0007669"/>
    <property type="project" value="UniProtKB-UniRule"/>
</dbReference>
<dbReference type="GO" id="GO:0004373">
    <property type="term" value="F:alpha-1,4-glucan glucosyltransferase (UDP-glucose donor) activity"/>
    <property type="evidence" value="ECO:0007669"/>
    <property type="project" value="InterPro"/>
</dbReference>
<dbReference type="GO" id="GO:0005978">
    <property type="term" value="P:glycogen biosynthetic process"/>
    <property type="evidence" value="ECO:0007669"/>
    <property type="project" value="UniProtKB-UniRule"/>
</dbReference>
<dbReference type="CDD" id="cd03791">
    <property type="entry name" value="GT5_Glycogen_synthase_DULL1-like"/>
    <property type="match status" value="1"/>
</dbReference>
<dbReference type="Gene3D" id="3.40.50.2000">
    <property type="entry name" value="Glycogen Phosphorylase B"/>
    <property type="match status" value="2"/>
</dbReference>
<dbReference type="HAMAP" id="MF_00484">
    <property type="entry name" value="Glycogen_synth"/>
    <property type="match status" value="1"/>
</dbReference>
<dbReference type="InterPro" id="IPR001296">
    <property type="entry name" value="Glyco_trans_1"/>
</dbReference>
<dbReference type="InterPro" id="IPR011835">
    <property type="entry name" value="GS/SS"/>
</dbReference>
<dbReference type="InterPro" id="IPR013534">
    <property type="entry name" value="Starch_synth_cat_dom"/>
</dbReference>
<dbReference type="NCBIfam" id="TIGR02095">
    <property type="entry name" value="glgA"/>
    <property type="match status" value="1"/>
</dbReference>
<dbReference type="PANTHER" id="PTHR45825:SF11">
    <property type="entry name" value="ALPHA AMYLASE DOMAIN-CONTAINING PROTEIN"/>
    <property type="match status" value="1"/>
</dbReference>
<dbReference type="PANTHER" id="PTHR45825">
    <property type="entry name" value="GRANULE-BOUND STARCH SYNTHASE 1, CHLOROPLASTIC/AMYLOPLASTIC"/>
    <property type="match status" value="1"/>
</dbReference>
<dbReference type="Pfam" id="PF08323">
    <property type="entry name" value="Glyco_transf_5"/>
    <property type="match status" value="1"/>
</dbReference>
<dbReference type="Pfam" id="PF00534">
    <property type="entry name" value="Glycos_transf_1"/>
    <property type="match status" value="1"/>
</dbReference>
<dbReference type="SUPFAM" id="SSF53756">
    <property type="entry name" value="UDP-Glycosyltransferase/glycogen phosphorylase"/>
    <property type="match status" value="1"/>
</dbReference>
<proteinExistence type="inferred from homology"/>
<feature type="chain" id="PRO_1000126080" description="Glycogen synthase">
    <location>
        <begin position="1"/>
        <end position="482"/>
    </location>
</feature>
<feature type="binding site" evidence="1">
    <location>
        <position position="15"/>
    </location>
    <ligand>
        <name>ADP-alpha-D-glucose</name>
        <dbReference type="ChEBI" id="CHEBI:57498"/>
    </ligand>
</feature>